<evidence type="ECO:0000250" key="1">
    <source>
        <dbReference type="UniProtKB" id="P04798"/>
    </source>
</evidence>
<evidence type="ECO:0000255" key="2"/>
<evidence type="ECO:0000255" key="3">
    <source>
        <dbReference type="PROSITE-ProRule" id="PRU00498"/>
    </source>
</evidence>
<evidence type="ECO:0000269" key="4">
    <source>
    </source>
</evidence>
<evidence type="ECO:0000269" key="5">
    <source>
    </source>
</evidence>
<evidence type="ECO:0000269" key="6">
    <source>
    </source>
</evidence>
<evidence type="ECO:0000269" key="7">
    <source>
    </source>
</evidence>
<evidence type="ECO:0000303" key="8">
    <source>
    </source>
</evidence>
<evidence type="ECO:0000305" key="9"/>
<evidence type="ECO:0000305" key="10">
    <source>
    </source>
</evidence>
<evidence type="ECO:0000305" key="11">
    <source>
    </source>
</evidence>
<name>SIRC_LEPMC</name>
<comment type="function">
    <text evidence="4 5 6 7 10 11">Cytochrome P450 monooxygenase; part of the gene cluster that mediates the biosynthesis of sirodesmin PL, an epipolythiodioxopiperazine (ETP) characterized by a disulfide bridged cyclic dipeptide and that acts as a phytotoxin which is involved in the blackleg didease of canola (PubMed:15387811, PubMed:18272357, PubMed:19762440). SirD catalyzes the O-prenylation of L-tyrosine (L-Tyr) in the presence of dimethylallyl diphosphate (DMAPP) to yield 4-O-dimethylallyl-L-Tyr, and therefore represents probably the first pathway-specific enzyme in the biosynthesis of sirodesmin PL (PubMed:19762440, PubMed:21038099, PubMed:24083562). 4-O-dimethylallyl-L-Tyr, then undergoes condensation with L-Ser in a reaction catalyzed by the non-ribosomal peptide synthase sirP to form the diketopiperazine (DKP) backbone (PubMed:18272357). Further bishydroxylation of the DKP performed by the cytochrome P450 monooxygenase sirC leads to the production of the intermediate phomamide (PubMed:27390873). This step is essential to form the reactive thiol group required for toxicity of sirodesmin PL (PubMed:27390873). The next steps of sirodesmin biosynthesis are not well understood yet, but some predictions could be made from intermediate compounds identification (PubMed:18272357). Phomamide is converted into phomalizarine via oxidation, probably by sirT (PubMed:18272357). Further oxidation, methylation (by sirM or sirN) and reduction steps convert phomalizarine to deacetyl sirodesmin (PubMed:18272357). Finally, acetyltransferase sirH probably acetylates deacetyl sirodesmin to produce sirodesmin PL (PubMed:18272357).</text>
</comment>
<comment type="cofactor">
    <cofactor evidence="1">
        <name>heme</name>
        <dbReference type="ChEBI" id="CHEBI:30413"/>
    </cofactor>
</comment>
<comment type="pathway">
    <text evidence="10">Mycotoxin biosynthesis.</text>
</comment>
<comment type="subcellular location">
    <subcellularLocation>
        <location evidence="2">Membrane</location>
        <topology evidence="2">Single-pass membrane protein</topology>
    </subcellularLocation>
</comment>
<comment type="similarity">
    <text evidence="9">Belongs to the cytochrome P450 family.</text>
</comment>
<keyword id="KW-0325">Glycoprotein</keyword>
<keyword id="KW-0349">Heme</keyword>
<keyword id="KW-0408">Iron</keyword>
<keyword id="KW-0472">Membrane</keyword>
<keyword id="KW-0479">Metal-binding</keyword>
<keyword id="KW-0503">Monooxygenase</keyword>
<keyword id="KW-0560">Oxidoreductase</keyword>
<keyword id="KW-0812">Transmembrane</keyword>
<keyword id="KW-1133">Transmembrane helix</keyword>
<keyword id="KW-0843">Virulence</keyword>
<feature type="chain" id="PRO_0000437706" description="Cytochrome P450 monooxygenase sirC">
    <location>
        <begin position="1"/>
        <end position="470"/>
    </location>
</feature>
<feature type="transmembrane region" description="Helical" evidence="2">
    <location>
        <begin position="12"/>
        <end position="34"/>
    </location>
</feature>
<feature type="binding site" description="axial binding residue" evidence="1">
    <location>
        <position position="410"/>
    </location>
    <ligand>
        <name>heme</name>
        <dbReference type="ChEBI" id="CHEBI:30413"/>
    </ligand>
    <ligandPart>
        <name>Fe</name>
        <dbReference type="ChEBI" id="CHEBI:18248"/>
    </ligandPart>
</feature>
<feature type="glycosylation site" description="N-linked (GlcNAc...) asparagine" evidence="3">
    <location>
        <position position="399"/>
    </location>
</feature>
<sequence length="470" mass="53860">MESIVYETQPLLRGMVVGTIMLLCYRYGLALSILQLYLNFMYRITNEKGKPLRGPEFSWPDGQTVEKFLQGGQKSFSWQAYGPLYRIWTVFRPEVVITRPEDVKAFFFDSHTHQKAASSNAGWLFSQILGDCLGLINGERWSRVRHAFDPFFTRKISAQRLPHIMAAGEGYVNEVHQYDLGGKQAASTINLNAVDAFQRFPFFYVAEIIYGPLGITERVELWKLAETHTNIFRRLVQGGIHRYKATKFLSTSAYKETAHFVAAWRQFTLELAQKQLREGRTSPLTDLMAEVEDGKVTLNEVLHTIDESLFANLDVTTHVLTWAIVLLGNHPDVQELVRSEIKANTNDLETYMNRKDTLLHYSLLESLRVRPLLAFTIPESAQEDKVLSGYRVPKNIRYNLSTFGFGPRKCLGQHMAENMIKAILVPLLRQFRFKLLADQYKNGEYKVDKTNWVTLSDVNLEMERVPSGGS</sequence>
<protein>
    <recommendedName>
        <fullName evidence="8">Cytochrome P450 monooxygenase sirC</fullName>
        <ecNumber evidence="10">1.-.-.-</ecNumber>
    </recommendedName>
    <alternativeName>
        <fullName evidence="8">Sirodesmin biosynthesis protein C</fullName>
    </alternativeName>
</protein>
<reference key="1">
    <citation type="journal article" date="2004" name="Mol. Microbiol.">
        <title>The sirodesmin biosynthetic gene cluster of the plant pathogenic fungus Leptosphaeria maculans.</title>
        <authorList>
            <person name="Gardiner D.M."/>
            <person name="Cozijnsen A.J."/>
            <person name="Wilson L.M."/>
            <person name="Pedras M.S."/>
            <person name="Howlett B.J."/>
        </authorList>
    </citation>
    <scope>NUCLEOTIDE SEQUENCE [GENOMIC DNA]</scope>
    <scope>FUNCTION</scope>
</reference>
<reference key="2">
    <citation type="journal article" date="2008" name="Mycol. Res.">
        <title>Biosynthetic gene clusters for epipolythiodioxopiperazines in filamentous fungi.</title>
        <authorList>
            <person name="Fox E.M."/>
            <person name="Howlett B.J."/>
        </authorList>
    </citation>
    <scope>FUNCTION</scope>
</reference>
<reference key="3">
    <citation type="journal article" date="2010" name="Microbiology">
        <title>A tyrosine O-prenyltransferase catalyses the first pathway-specific step in the biosynthesis of sirodesmin PL.</title>
        <authorList>
            <person name="Kremer A."/>
            <person name="Li S.M."/>
        </authorList>
    </citation>
    <scope>FUNCTION</scope>
</reference>
<reference key="4">
    <citation type="journal article" date="2011" name="Appl. Microbiol. Biotechnol.">
        <title>The tyrosine O-prenyltransferase SirD catalyzes O-, N-, and C-prenylations.</title>
        <authorList>
            <person name="Zou H.X."/>
            <person name="Xie X."/>
            <person name="Zheng X.D."/>
            <person name="Li S.M."/>
        </authorList>
    </citation>
    <scope>FUNCTION</scope>
</reference>
<reference key="5">
    <citation type="journal article" date="2013" name="ACS Chem. Biol.">
        <title>Tyrosine O-prenyltransferase SirD catalyzes S-, C-, and N-prenylations on tyrosine and tryptophan derivatives.</title>
        <authorList>
            <person name="Rudolf J.D."/>
            <person name="Poulter C.D."/>
        </authorList>
    </citation>
    <scope>FUNCTION</scope>
</reference>
<reference key="6">
    <citation type="journal article" date="2016" name="PLoS ONE">
        <title>The epipolythiodiketopiperazine gene cluster in Claviceps purpurea: dysfunctional cytochrome P450 enzyme prevents formation of the previously unknown clapurines.</title>
        <authorList>
            <person name="Dopstadt J."/>
            <person name="Neubauer L."/>
            <person name="Tudzynski P."/>
            <person name="Humpf H.U."/>
        </authorList>
    </citation>
    <scope>FUNCTION</scope>
    <scope>CATALYTIC ACTIVITY</scope>
</reference>
<gene>
    <name evidence="8" type="primary">sirC</name>
</gene>
<organism>
    <name type="scientific">Leptosphaeria maculans</name>
    <name type="common">Blackleg fungus</name>
    <name type="synonym">Phoma lingam</name>
    <dbReference type="NCBI Taxonomy" id="5022"/>
    <lineage>
        <taxon>Eukaryota</taxon>
        <taxon>Fungi</taxon>
        <taxon>Dikarya</taxon>
        <taxon>Ascomycota</taxon>
        <taxon>Pezizomycotina</taxon>
        <taxon>Dothideomycetes</taxon>
        <taxon>Pleosporomycetidae</taxon>
        <taxon>Pleosporales</taxon>
        <taxon>Pleosporineae</taxon>
        <taxon>Leptosphaeriaceae</taxon>
        <taxon>Plenodomus</taxon>
        <taxon>Plenodomus lingam/Leptosphaeria maculans species complex</taxon>
    </lineage>
</organism>
<proteinExistence type="evidence at protein level"/>
<dbReference type="EC" id="1.-.-.-" evidence="10"/>
<dbReference type="EMBL" id="AY553235">
    <property type="protein sequence ID" value="AAS92547.1"/>
    <property type="molecule type" value="Genomic_DNA"/>
</dbReference>
<dbReference type="SMR" id="Q6Q881"/>
<dbReference type="GlyCosmos" id="Q6Q881">
    <property type="glycosylation" value="1 site, No reported glycans"/>
</dbReference>
<dbReference type="GO" id="GO:0016020">
    <property type="term" value="C:membrane"/>
    <property type="evidence" value="ECO:0007669"/>
    <property type="project" value="UniProtKB-SubCell"/>
</dbReference>
<dbReference type="GO" id="GO:0020037">
    <property type="term" value="F:heme binding"/>
    <property type="evidence" value="ECO:0007669"/>
    <property type="project" value="InterPro"/>
</dbReference>
<dbReference type="GO" id="GO:0005506">
    <property type="term" value="F:iron ion binding"/>
    <property type="evidence" value="ECO:0007669"/>
    <property type="project" value="InterPro"/>
</dbReference>
<dbReference type="GO" id="GO:0004497">
    <property type="term" value="F:monooxygenase activity"/>
    <property type="evidence" value="ECO:0007669"/>
    <property type="project" value="UniProtKB-KW"/>
</dbReference>
<dbReference type="GO" id="GO:0016705">
    <property type="term" value="F:oxidoreductase activity, acting on paired donors, with incorporation or reduction of molecular oxygen"/>
    <property type="evidence" value="ECO:0007669"/>
    <property type="project" value="InterPro"/>
</dbReference>
<dbReference type="Gene3D" id="1.10.630.10">
    <property type="entry name" value="Cytochrome P450"/>
    <property type="match status" value="2"/>
</dbReference>
<dbReference type="InterPro" id="IPR001128">
    <property type="entry name" value="Cyt_P450"/>
</dbReference>
<dbReference type="InterPro" id="IPR017972">
    <property type="entry name" value="Cyt_P450_CS"/>
</dbReference>
<dbReference type="InterPro" id="IPR002401">
    <property type="entry name" value="Cyt_P450_E_grp-I"/>
</dbReference>
<dbReference type="InterPro" id="IPR036396">
    <property type="entry name" value="Cyt_P450_sf"/>
</dbReference>
<dbReference type="InterPro" id="IPR050196">
    <property type="entry name" value="Cytochrome_P450_Monoox"/>
</dbReference>
<dbReference type="PANTHER" id="PTHR24291">
    <property type="entry name" value="CYTOCHROME P450 FAMILY 4"/>
    <property type="match status" value="1"/>
</dbReference>
<dbReference type="PANTHER" id="PTHR24291:SF167">
    <property type="entry name" value="CYTOCHROME P450 MONOOXYGENASE GLIC"/>
    <property type="match status" value="1"/>
</dbReference>
<dbReference type="Pfam" id="PF00067">
    <property type="entry name" value="p450"/>
    <property type="match status" value="2"/>
</dbReference>
<dbReference type="PRINTS" id="PR00463">
    <property type="entry name" value="EP450I"/>
</dbReference>
<dbReference type="SUPFAM" id="SSF48264">
    <property type="entry name" value="Cytochrome P450"/>
    <property type="match status" value="1"/>
</dbReference>
<dbReference type="PROSITE" id="PS00086">
    <property type="entry name" value="CYTOCHROME_P450"/>
    <property type="match status" value="1"/>
</dbReference>
<accession>Q6Q881</accession>